<gene>
    <name type="primary">rcl1</name>
    <name type="ORF">DDB_G0282803</name>
</gene>
<keyword id="KW-0539">Nucleus</keyword>
<keyword id="KW-1185">Reference proteome</keyword>
<keyword id="KW-0690">Ribosome biogenesis</keyword>
<sequence length="371" mass="40810">MLKFQGSTHFRQRIICSTLSGKAIRITNIRDEDEKPGLRDYEASFLRLVDKITNGSKIEINSTGTQITYIPGIIIGGKGITHECGTVRGIGYFVEALICLGPFAKAPLDITLNGITNNDIDLTIDTIRTTTLPIIRKFGIEEGLIIKIIKRGAPPNGGGSVNFKCPIVPHLKAIQLIDEGKIRRIRGIAYATRISPQFSNRVLDKAKGLLLEYTPDVYISSDHYKGNESGLSPGYGLTLVAETTTGCCLSAECMSNTGIATTEQQLQKQKSTSETPEDLGERTAFALLEEIFNGGCIDSHNQSLALLFMVLCPEDISKVRLGKITPYTIEFIRQLRDFFGVTFKIEPDQNSKTVLFTCLGIGYKNMARSTF</sequence>
<reference key="1">
    <citation type="journal article" date="2005" name="Nature">
        <title>The genome of the social amoeba Dictyostelium discoideum.</title>
        <authorList>
            <person name="Eichinger L."/>
            <person name="Pachebat J.A."/>
            <person name="Gloeckner G."/>
            <person name="Rajandream M.A."/>
            <person name="Sucgang R."/>
            <person name="Berriman M."/>
            <person name="Song J."/>
            <person name="Olsen R."/>
            <person name="Szafranski K."/>
            <person name="Xu Q."/>
            <person name="Tunggal B."/>
            <person name="Kummerfeld S."/>
            <person name="Madera M."/>
            <person name="Konfortov B.A."/>
            <person name="Rivero F."/>
            <person name="Bankier A.T."/>
            <person name="Lehmann R."/>
            <person name="Hamlin N."/>
            <person name="Davies R."/>
            <person name="Gaudet P."/>
            <person name="Fey P."/>
            <person name="Pilcher K."/>
            <person name="Chen G."/>
            <person name="Saunders D."/>
            <person name="Sodergren E.J."/>
            <person name="Davis P."/>
            <person name="Kerhornou A."/>
            <person name="Nie X."/>
            <person name="Hall N."/>
            <person name="Anjard C."/>
            <person name="Hemphill L."/>
            <person name="Bason N."/>
            <person name="Farbrother P."/>
            <person name="Desany B."/>
            <person name="Just E."/>
            <person name="Morio T."/>
            <person name="Rost R."/>
            <person name="Churcher C.M."/>
            <person name="Cooper J."/>
            <person name="Haydock S."/>
            <person name="van Driessche N."/>
            <person name="Cronin A."/>
            <person name="Goodhead I."/>
            <person name="Muzny D.M."/>
            <person name="Mourier T."/>
            <person name="Pain A."/>
            <person name="Lu M."/>
            <person name="Harper D."/>
            <person name="Lindsay R."/>
            <person name="Hauser H."/>
            <person name="James K.D."/>
            <person name="Quiles M."/>
            <person name="Madan Babu M."/>
            <person name="Saito T."/>
            <person name="Buchrieser C."/>
            <person name="Wardroper A."/>
            <person name="Felder M."/>
            <person name="Thangavelu M."/>
            <person name="Johnson D."/>
            <person name="Knights A."/>
            <person name="Loulseged H."/>
            <person name="Mungall K.L."/>
            <person name="Oliver K."/>
            <person name="Price C."/>
            <person name="Quail M.A."/>
            <person name="Urushihara H."/>
            <person name="Hernandez J."/>
            <person name="Rabbinowitsch E."/>
            <person name="Steffen D."/>
            <person name="Sanders M."/>
            <person name="Ma J."/>
            <person name="Kohara Y."/>
            <person name="Sharp S."/>
            <person name="Simmonds M.N."/>
            <person name="Spiegler S."/>
            <person name="Tivey A."/>
            <person name="Sugano S."/>
            <person name="White B."/>
            <person name="Walker D."/>
            <person name="Woodward J.R."/>
            <person name="Winckler T."/>
            <person name="Tanaka Y."/>
            <person name="Shaulsky G."/>
            <person name="Schleicher M."/>
            <person name="Weinstock G.M."/>
            <person name="Rosenthal A."/>
            <person name="Cox E.C."/>
            <person name="Chisholm R.L."/>
            <person name="Gibbs R.A."/>
            <person name="Loomis W.F."/>
            <person name="Platzer M."/>
            <person name="Kay R.R."/>
            <person name="Williams J.G."/>
            <person name="Dear P.H."/>
            <person name="Noegel A.A."/>
            <person name="Barrell B.G."/>
            <person name="Kuspa A."/>
        </authorList>
    </citation>
    <scope>NUCLEOTIDE SEQUENCE [LARGE SCALE GENOMIC DNA]</scope>
    <source>
        <strain>AX4</strain>
    </source>
</reference>
<reference key="2">
    <citation type="journal article" date="2006" name="Mol. Cell. Proteomics">
        <title>Proteomics fingerprinting of phagosome maturation and evidence for the role of a Galpha during uptake.</title>
        <authorList>
            <person name="Gotthardt D."/>
            <person name="Blancheteau V."/>
            <person name="Bosserhoff A."/>
            <person name="Ruppert T."/>
            <person name="Delorenzi M."/>
            <person name="Soldati T."/>
        </authorList>
    </citation>
    <scope>IDENTIFICATION BY MASS SPECTROMETRY [LARGE SCALE ANALYSIS]</scope>
    <source>
        <strain>AX2</strain>
    </source>
</reference>
<accession>Q54S38</accession>
<name>RCL1_DICDI</name>
<dbReference type="EMBL" id="AAFI02000047">
    <property type="protein sequence ID" value="EAL66261.2"/>
    <property type="molecule type" value="Genomic_DNA"/>
</dbReference>
<dbReference type="RefSeq" id="XP_640201.2">
    <property type="nucleotide sequence ID" value="XM_635109.2"/>
</dbReference>
<dbReference type="SMR" id="Q54S38"/>
<dbReference type="FunCoup" id="Q54S38">
    <property type="interactions" value="841"/>
</dbReference>
<dbReference type="STRING" id="44689.Q54S38"/>
<dbReference type="PaxDb" id="44689-DDB0238227"/>
<dbReference type="EnsemblProtists" id="EAL66261">
    <property type="protein sequence ID" value="EAL66261"/>
    <property type="gene ID" value="DDB_G0282803"/>
</dbReference>
<dbReference type="GeneID" id="8623741"/>
<dbReference type="KEGG" id="ddi:DDB_G0282803"/>
<dbReference type="dictyBase" id="DDB_G0282803">
    <property type="gene designation" value="rcl1"/>
</dbReference>
<dbReference type="VEuPathDB" id="AmoebaDB:DDB_G0282803"/>
<dbReference type="eggNOG" id="KOG3980">
    <property type="taxonomic scope" value="Eukaryota"/>
</dbReference>
<dbReference type="HOGENOM" id="CLU_027882_1_0_1"/>
<dbReference type="InParanoid" id="Q54S38"/>
<dbReference type="OMA" id="YTDQNKG"/>
<dbReference type="PhylomeDB" id="Q54S38"/>
<dbReference type="Reactome" id="R-DDI-6791226">
    <property type="pathway name" value="Major pathway of rRNA processing in the nucleolus and cytosol"/>
</dbReference>
<dbReference type="PRO" id="PR:Q54S38"/>
<dbReference type="Proteomes" id="UP000002195">
    <property type="component" value="Chromosome 3"/>
</dbReference>
<dbReference type="GO" id="GO:0005730">
    <property type="term" value="C:nucleolus"/>
    <property type="evidence" value="ECO:0007669"/>
    <property type="project" value="UniProtKB-SubCell"/>
</dbReference>
<dbReference type="GO" id="GO:0045335">
    <property type="term" value="C:phagocytic vesicle"/>
    <property type="evidence" value="ECO:0007005"/>
    <property type="project" value="dictyBase"/>
</dbReference>
<dbReference type="GO" id="GO:0032040">
    <property type="term" value="C:small-subunit processome"/>
    <property type="evidence" value="ECO:0000250"/>
    <property type="project" value="UniProtKB"/>
</dbReference>
<dbReference type="GO" id="GO:0004521">
    <property type="term" value="F:RNA endonuclease activity"/>
    <property type="evidence" value="ECO:0000318"/>
    <property type="project" value="GO_Central"/>
</dbReference>
<dbReference type="GO" id="GO:0000479">
    <property type="term" value="P:endonucleolytic cleavage of tricistronic rRNA transcript (SSU-rRNA, 5.8S rRNA, LSU-rRNA)"/>
    <property type="evidence" value="ECO:0000318"/>
    <property type="project" value="GO_Central"/>
</dbReference>
<dbReference type="GO" id="GO:0042274">
    <property type="term" value="P:ribosomal small subunit biogenesis"/>
    <property type="evidence" value="ECO:0000250"/>
    <property type="project" value="UniProtKB"/>
</dbReference>
<dbReference type="CDD" id="cd00875">
    <property type="entry name" value="RNA_Cyclase_Class_I"/>
    <property type="match status" value="1"/>
</dbReference>
<dbReference type="FunFam" id="3.30.360.20:FF:000014">
    <property type="match status" value="1"/>
</dbReference>
<dbReference type="Gene3D" id="3.65.10.20">
    <property type="entry name" value="RNA 3'-terminal phosphate cyclase domain"/>
    <property type="match status" value="1"/>
</dbReference>
<dbReference type="Gene3D" id="3.30.360.20">
    <property type="entry name" value="RNA 3'-terminal phosphate cyclase, insert domain"/>
    <property type="match status" value="1"/>
</dbReference>
<dbReference type="InterPro" id="IPR013791">
    <property type="entry name" value="RNA3'-term_phos_cycl_insert"/>
</dbReference>
<dbReference type="InterPro" id="IPR023797">
    <property type="entry name" value="RNA3'_phos_cyclase_dom"/>
</dbReference>
<dbReference type="InterPro" id="IPR037136">
    <property type="entry name" value="RNA3'_phos_cyclase_dom_sf"/>
</dbReference>
<dbReference type="InterPro" id="IPR000228">
    <property type="entry name" value="RNA3'_term_phos_cyc"/>
</dbReference>
<dbReference type="InterPro" id="IPR016443">
    <property type="entry name" value="RNA3'_term_phos_cyc_type_2"/>
</dbReference>
<dbReference type="InterPro" id="IPR020719">
    <property type="entry name" value="RNA3'_term_phos_cycl-like_CS"/>
</dbReference>
<dbReference type="InterPro" id="IPR013792">
    <property type="entry name" value="RNA3'P_cycl/enolpyr_Trfase_a/b"/>
</dbReference>
<dbReference type="InterPro" id="IPR036553">
    <property type="entry name" value="RPTC_insert"/>
</dbReference>
<dbReference type="NCBIfam" id="TIGR03400">
    <property type="entry name" value="18S_RNA_Rcl1p"/>
    <property type="match status" value="1"/>
</dbReference>
<dbReference type="PANTHER" id="PTHR11096">
    <property type="entry name" value="RNA 3' TERMINAL PHOSPHATE CYCLASE"/>
    <property type="match status" value="1"/>
</dbReference>
<dbReference type="PANTHER" id="PTHR11096:SF1">
    <property type="entry name" value="RNA 3'-TERMINAL PHOSPHATE CYCLASE-LIKE PROTEIN"/>
    <property type="match status" value="1"/>
</dbReference>
<dbReference type="Pfam" id="PF01137">
    <property type="entry name" value="RTC"/>
    <property type="match status" value="1"/>
</dbReference>
<dbReference type="Pfam" id="PF05189">
    <property type="entry name" value="RTC_insert"/>
    <property type="match status" value="1"/>
</dbReference>
<dbReference type="PIRSF" id="PIRSF005378">
    <property type="entry name" value="RNA3'_term_phos_cycl_euk"/>
    <property type="match status" value="1"/>
</dbReference>
<dbReference type="SUPFAM" id="SSF55205">
    <property type="entry name" value="EPT/RTPC-like"/>
    <property type="match status" value="1"/>
</dbReference>
<dbReference type="PROSITE" id="PS01287">
    <property type="entry name" value="RTC"/>
    <property type="match status" value="1"/>
</dbReference>
<organism>
    <name type="scientific">Dictyostelium discoideum</name>
    <name type="common">Social amoeba</name>
    <dbReference type="NCBI Taxonomy" id="44689"/>
    <lineage>
        <taxon>Eukaryota</taxon>
        <taxon>Amoebozoa</taxon>
        <taxon>Evosea</taxon>
        <taxon>Eumycetozoa</taxon>
        <taxon>Dictyostelia</taxon>
        <taxon>Dictyosteliales</taxon>
        <taxon>Dictyosteliaceae</taxon>
        <taxon>Dictyostelium</taxon>
    </lineage>
</organism>
<feature type="chain" id="PRO_0000330338" description="Probable RNA 3'-terminal phosphate cyclase-like protein">
    <location>
        <begin position="1"/>
        <end position="371"/>
    </location>
</feature>
<protein>
    <recommendedName>
        <fullName>Probable RNA 3'-terminal phosphate cyclase-like protein</fullName>
    </recommendedName>
</protein>
<proteinExistence type="evidence at protein level"/>
<evidence type="ECO:0000250" key="1">
    <source>
        <dbReference type="UniProtKB" id="Q08096"/>
    </source>
</evidence>
<evidence type="ECO:0000250" key="2">
    <source>
        <dbReference type="UniProtKB" id="Q9Y2P8"/>
    </source>
</evidence>
<evidence type="ECO:0000305" key="3"/>
<comment type="function">
    <text evidence="1 2">Part of the small subunit (SSU) processome, first precursor of the small eukaryotic ribosomal subunit. During the assembly of the SSU processome in the nucleolus, many ribosome biogenesis factors, an RNA chaperone and ribosomal proteins associate with the nascent pre-rRNA and work in concert to generate RNA folding, modifications, rearrangements and cleavage as well as targeted degradation of pre-ribosomal RNA by the RNA exosome (By similarity). Does not have cyclase activity (By similarity).</text>
</comment>
<comment type="subunit">
    <text evidence="2">Part of the small subunit (SSU) processome, composed of more than 70 proteins and the RNA chaperone small nucleolar RNA (snoRNA) U3.</text>
</comment>
<comment type="subcellular location">
    <subcellularLocation>
        <location evidence="2">Nucleus</location>
        <location evidence="2">Nucleolus</location>
    </subcellularLocation>
</comment>
<comment type="similarity">
    <text evidence="3">Belongs to the RNA 3'-terminal cyclase family. Type 2 subfamily.</text>
</comment>